<gene>
    <name evidence="1" type="primary">rpl33</name>
</gene>
<dbReference type="EMBL" id="AB042240">
    <property type="protein sequence ID" value="BAB47054.1"/>
    <property type="molecule type" value="Genomic_DNA"/>
</dbReference>
<dbReference type="RefSeq" id="NP_114279.1">
    <property type="nucleotide sequence ID" value="NC_002762.1"/>
</dbReference>
<dbReference type="STRING" id="4565.Q95H56"/>
<dbReference type="PaxDb" id="4565-EPlTAEP00000010074"/>
<dbReference type="EnsemblPlants" id="TraesARI1D03G00531630.1">
    <property type="protein sequence ID" value="TraesARI1D03G00531630.1.CDS1"/>
    <property type="gene ID" value="TraesARI1D03G00531630"/>
</dbReference>
<dbReference type="EnsemblPlants" id="TraesARI2A03G00780810.1">
    <property type="protein sequence ID" value="TraesARI2A03G00780810.1.CDS1"/>
    <property type="gene ID" value="TraesARI2A03G00780810"/>
</dbReference>
<dbReference type="EnsemblPlants" id="TraesARI2A03G00780820.1">
    <property type="protein sequence ID" value="TraesARI2A03G00780820.1.CDS1"/>
    <property type="gene ID" value="TraesARI2A03G00780820"/>
</dbReference>
<dbReference type="EnsemblPlants" id="TraesARI2A03G00780840.1">
    <property type="protein sequence ID" value="TraesARI2A03G00780840.1.CDS1"/>
    <property type="gene ID" value="TraesARI2A03G00780840"/>
</dbReference>
<dbReference type="EnsemblPlants" id="TraesARI3A03G01541340.1">
    <property type="protein sequence ID" value="TraesARI3A03G01541340.1.CDS1"/>
    <property type="gene ID" value="TraesARI3A03G01541340"/>
</dbReference>
<dbReference type="EnsemblPlants" id="TraesARI3D03G01842130.1">
    <property type="protein sequence ID" value="TraesARI3D03G01842130.1.CDS1"/>
    <property type="gene ID" value="TraesARI3D03G01842130"/>
</dbReference>
<dbReference type="EnsemblPlants" id="TraesCS1D02G295600.1">
    <property type="protein sequence ID" value="TraesCS1D02G295600.1.cds1"/>
    <property type="gene ID" value="TraesCS1D02G295600"/>
</dbReference>
<dbReference type="EnsemblPlants" id="TraesCS1D03G0705500.1">
    <property type="protein sequence ID" value="TraesCS1D03G0705500.1.CDS1"/>
    <property type="gene ID" value="TraesCS1D03G0705500"/>
</dbReference>
<dbReference type="EnsemblPlants" id="TraesCS3D02G053000.1">
    <property type="protein sequence ID" value="TraesCS3D02G053000.1.cds1"/>
    <property type="gene ID" value="TraesCS3D02G053000"/>
</dbReference>
<dbReference type="EnsemblPlants" id="TraesCS3D03G0097900.1">
    <property type="protein sequence ID" value="TraesCS3D03G0097900.1.CDS1"/>
    <property type="gene ID" value="TraesCS3D03G0097900"/>
</dbReference>
<dbReference type="EnsemblPlants" id="TraesCSU02G268900.1">
    <property type="protein sequence ID" value="TraesCSU02G268900.1.cds1"/>
    <property type="gene ID" value="TraesCSU02G268900"/>
</dbReference>
<dbReference type="EnsemblPlants" id="TraesCSU03G0538000.1">
    <property type="protein sequence ID" value="TraesCSU03G0538000.1.CDS1"/>
    <property type="gene ID" value="TraesCSU03G0538000"/>
</dbReference>
<dbReference type="EnsemblPlants" id="TraesJAG1D03G00525330.1">
    <property type="protein sequence ID" value="TraesJAG1D03G00525330.1.CDS1"/>
    <property type="gene ID" value="TraesJAG1D03G00525330"/>
</dbReference>
<dbReference type="EnsemblPlants" id="TraesJAG3D03G01819610.1">
    <property type="protein sequence ID" value="TraesJAG3D03G01819610.1.CDS1"/>
    <property type="gene ID" value="TraesJAG3D03G01819610"/>
</dbReference>
<dbReference type="EnsemblPlants" id="TraesJUL1D03G00528630.1">
    <property type="protein sequence ID" value="TraesJUL1D03G00528630.1.CDS1"/>
    <property type="gene ID" value="TraesJUL1D03G00528630"/>
</dbReference>
<dbReference type="EnsemblPlants" id="TraesJUL3D03G01828580.1">
    <property type="protein sequence ID" value="TraesJUL3D03G01828580.1.CDS1"/>
    <property type="gene ID" value="TraesJUL3D03G01828580"/>
</dbReference>
<dbReference type="EnsemblPlants" id="TraesKAR1D01G0283970.1">
    <property type="protein sequence ID" value="cds.TraesKAR1D01G0283970.1"/>
    <property type="gene ID" value="TraesKAR1D01G0283970"/>
</dbReference>
<dbReference type="EnsemblPlants" id="TraesKAR2D01G0456630.1">
    <property type="protein sequence ID" value="cds.TraesKAR2D01G0456630.1"/>
    <property type="gene ID" value="TraesKAR2D01G0456630"/>
</dbReference>
<dbReference type="EnsemblPlants" id="TraesKAR3D01G0039630.1">
    <property type="protein sequence ID" value="cds.TraesKAR3D01G0039630.1"/>
    <property type="gene ID" value="TraesKAR3D01G0039630"/>
</dbReference>
<dbReference type="EnsemblPlants" id="TraesKAR6B01G0219430.1">
    <property type="protein sequence ID" value="cds.TraesKAR6B01G0219430.1"/>
    <property type="gene ID" value="TraesKAR6B01G0219430"/>
</dbReference>
<dbReference type="EnsemblPlants" id="TraesKAR6B01G0220180.1">
    <property type="protein sequence ID" value="cds.TraesKAR6B01G0220180.1"/>
    <property type="gene ID" value="TraesKAR6B01G0220180"/>
</dbReference>
<dbReference type="EnsemblPlants" id="TraesKARUn01G0033160.1">
    <property type="protein sequence ID" value="cds.TraesKARUn01G0033160.1"/>
    <property type="gene ID" value="TraesKARUn01G0033160"/>
</dbReference>
<dbReference type="EnsemblPlants" id="TraesKARUn01G0033190.1">
    <property type="protein sequence ID" value="cds.TraesKARUn01G0033190.1"/>
    <property type="gene ID" value="TraesKARUn01G0033190"/>
</dbReference>
<dbReference type="EnsemblPlants" id="TraesKARUn01G0033320.1">
    <property type="protein sequence ID" value="cds.TraesKARUn01G0033320.1"/>
    <property type="gene ID" value="TraesKARUn01G0033320"/>
</dbReference>
<dbReference type="EnsemblPlants" id="TraesKARUn01G0033630.1">
    <property type="protein sequence ID" value="cds.TraesKARUn01G0033630.1"/>
    <property type="gene ID" value="TraesKARUn01G0033630"/>
</dbReference>
<dbReference type="EnsemblPlants" id="TraesKARUn01G0033680.1">
    <property type="protein sequence ID" value="cds.TraesKARUn01G0033680.1"/>
    <property type="gene ID" value="TraesKARUn01G0033680"/>
</dbReference>
<dbReference type="EnsemblPlants" id="TraesKARUn01G0033730.1">
    <property type="protein sequence ID" value="cds.TraesKARUn01G0033730.1"/>
    <property type="gene ID" value="TraesKARUn01G0033730"/>
</dbReference>
<dbReference type="EnsemblPlants" id="TraesKARUn01G0075090.1">
    <property type="protein sequence ID" value="cds.TraesKARUn01G0075090.1"/>
    <property type="gene ID" value="TraesKARUn01G0075090"/>
</dbReference>
<dbReference type="EnsemblPlants" id="TraesKARUn01G0081430.1">
    <property type="protein sequence ID" value="cds.TraesKARUn01G0081430.1"/>
    <property type="gene ID" value="TraesKARUn01G0081430"/>
</dbReference>
<dbReference type="EnsemblPlants" id="TraesKARUn01G0082270.1">
    <property type="protein sequence ID" value="cds.TraesKARUn01G0082270.1"/>
    <property type="gene ID" value="TraesKARUn01G0082270"/>
</dbReference>
<dbReference type="EnsemblPlants" id="TraesKARUn01G0096130.1">
    <property type="protein sequence ID" value="cds.TraesKARUn01G0096130.1"/>
    <property type="gene ID" value="TraesKARUn01G0096130"/>
</dbReference>
<dbReference type="EnsemblPlants" id="TraesKARUn01G0100370.1">
    <property type="protein sequence ID" value="cds.TraesKARUn01G0100370.1"/>
    <property type="gene ID" value="TraesKARUn01G0100370"/>
</dbReference>
<dbReference type="EnsemblPlants" id="TraesKARUn01G0100600.1">
    <property type="protein sequence ID" value="cds.TraesKARUn01G0100600.1"/>
    <property type="gene ID" value="TraesKARUn01G0100600"/>
</dbReference>
<dbReference type="EnsemblPlants" id="TraesKARUn01G0100690.1">
    <property type="protein sequence ID" value="cds.TraesKARUn01G0100690.1"/>
    <property type="gene ID" value="TraesKARUn01G0100690"/>
</dbReference>
<dbReference type="EnsemblPlants" id="TraesKARUn01G0100880.1">
    <property type="protein sequence ID" value="cds.TraesKARUn01G0100880.1"/>
    <property type="gene ID" value="TraesKARUn01G0100880"/>
</dbReference>
<dbReference type="EnsemblPlants" id="TraesKARUn01G0118990.1">
    <property type="protein sequence ID" value="cds.TraesKARUn01G0118990.1"/>
    <property type="gene ID" value="TraesKARUn01G0118990"/>
</dbReference>
<dbReference type="EnsemblPlants" id="TraesKARUn01G0174180.1">
    <property type="protein sequence ID" value="cds.TraesKARUn01G0174180.1"/>
    <property type="gene ID" value="TraesKARUn01G0174180"/>
</dbReference>
<dbReference type="EnsemblPlants" id="TraesKARUn01G0175270.1">
    <property type="protein sequence ID" value="cds.TraesKARUn01G0175270.1"/>
    <property type="gene ID" value="TraesKARUn01G0175270"/>
</dbReference>
<dbReference type="EnsemblPlants" id="TraesKARUn01G0177160.1">
    <property type="protein sequence ID" value="cds.TraesKARUn01G0177160.1"/>
    <property type="gene ID" value="TraesKARUn01G0177160"/>
</dbReference>
<dbReference type="EnsemblPlants" id="TraesKARUn01G0184960.1">
    <property type="protein sequence ID" value="cds.TraesKARUn01G0184960.1"/>
    <property type="gene ID" value="TraesKARUn01G0184960"/>
</dbReference>
<dbReference type="EnsemblPlants" id="TraesLAC1D03G00529000.1">
    <property type="protein sequence ID" value="TraesLAC1D03G00529000.1.CDS1"/>
    <property type="gene ID" value="TraesLAC1D03G00529000"/>
</dbReference>
<dbReference type="EnsemblPlants" id="TraesLDM1D03G00486570.1">
    <property type="protein sequence ID" value="TraesLDM1D03G00486570.1.CDS1"/>
    <property type="gene ID" value="TraesLDM1D03G00486570"/>
</dbReference>
<dbReference type="EnsemblPlants" id="TraesLDM1D03G00528230.1">
    <property type="protein sequence ID" value="TraesLDM1D03G00528230.1.CDS1"/>
    <property type="gene ID" value="TraesLDM1D03G00528230"/>
</dbReference>
<dbReference type="EnsemblPlants" id="TraesLDM7B03G04275540.1">
    <property type="protein sequence ID" value="TraesLDM7B03G04275540.1.CDS1"/>
    <property type="gene ID" value="TraesLDM7B03G04275540"/>
</dbReference>
<dbReference type="EnsemblPlants" id="TraesMAC1D03G00525030.1">
    <property type="protein sequence ID" value="TraesMAC1D03G00525030.1.CDS1"/>
    <property type="gene ID" value="TraesMAC1D03G00525030"/>
</dbReference>
<dbReference type="EnsemblPlants" id="TraesMAC3D03G01808490.1">
    <property type="protein sequence ID" value="TraesMAC3D03G01808490.1.CDS1"/>
    <property type="gene ID" value="TraesMAC3D03G01808490"/>
</dbReference>
<dbReference type="EnsemblPlants" id="TraesNOR1D03G00533640.1">
    <property type="protein sequence ID" value="TraesNOR1D03G00533640.1.CDS1"/>
    <property type="gene ID" value="TraesNOR1D03G00533640"/>
</dbReference>
<dbReference type="EnsemblPlants" id="TraesNOR3D03G01837010.1">
    <property type="protein sequence ID" value="TraesNOR3D03G01837010.1.CDS1"/>
    <property type="gene ID" value="TraesNOR3D03G01837010"/>
</dbReference>
<dbReference type="EnsemblPlants" id="TraesNOR3D03G01837040.1">
    <property type="protein sequence ID" value="TraesNOR3D03G01837040.1.CDS1"/>
    <property type="gene ID" value="TraesNOR3D03G01837040"/>
</dbReference>
<dbReference type="EnsemblPlants" id="TraesPARA_EIv1.0_0296400.1">
    <property type="protein sequence ID" value="TraesPARA_EIv1.0_0296400.1.CDS1"/>
    <property type="gene ID" value="TraesPARA_EIv1.0_0296400"/>
</dbReference>
<dbReference type="EnsemblPlants" id="TraesPARA_EIv1.0_1061580.1">
    <property type="protein sequence ID" value="TraesPARA_EIv1.0_1061580.1.CDS1"/>
    <property type="gene ID" value="TraesPARA_EIv1.0_1061580"/>
</dbReference>
<dbReference type="EnsemblPlants" id="TraesPARA_EIv1.0_2055520.1">
    <property type="protein sequence ID" value="TraesPARA_EIv1.0_2055520.1.CDS1"/>
    <property type="gene ID" value="TraesPARA_EIv1.0_2055520"/>
</dbReference>
<dbReference type="EnsemblPlants" id="TraesPARA_EIv1.0_2645360.1">
    <property type="protein sequence ID" value="TraesPARA_EIv1.0_2645360.1.CDS1"/>
    <property type="gene ID" value="TraesPARA_EIv1.0_2645360"/>
</dbReference>
<dbReference type="EnsemblPlants" id="TraesPARA_EIv1.0_2682060.1">
    <property type="protein sequence ID" value="TraesPARA_EIv1.0_2682060.1.CDS1"/>
    <property type="gene ID" value="TraesPARA_EIv1.0_2682060"/>
</dbReference>
<dbReference type="EnsemblPlants" id="TraesRN1D0100749200.1">
    <property type="protein sequence ID" value="TraesRN1D0100749200.1"/>
    <property type="gene ID" value="TraesRN1D0100749200"/>
</dbReference>
<dbReference type="EnsemblPlants" id="TraesRN2D0100667000.1">
    <property type="protein sequence ID" value="TraesRN2D0100667000.1"/>
    <property type="gene ID" value="TraesRN2D0100667000"/>
</dbReference>
<dbReference type="EnsemblPlants" id="TraesRN3B0100437900.1">
    <property type="protein sequence ID" value="TraesRN3B0100437900.1"/>
    <property type="gene ID" value="TraesRN3B0100437900"/>
</dbReference>
<dbReference type="EnsemblPlants" id="TraesRN3D0100107600.1">
    <property type="protein sequence ID" value="TraesRN3D0100107600.1"/>
    <property type="gene ID" value="TraesRN3D0100107600"/>
</dbReference>
<dbReference type="EnsemblPlants" id="TraesRN5D0100018900.1">
    <property type="protein sequence ID" value="TraesRN5D0100018900.1"/>
    <property type="gene ID" value="TraesRN5D0100018900"/>
</dbReference>
<dbReference type="EnsemblPlants" id="TraesRN5D0100890400.1">
    <property type="protein sequence ID" value="TraesRN5D0100890400.1"/>
    <property type="gene ID" value="TraesRN5D0100890400"/>
</dbReference>
<dbReference type="EnsemblPlants" id="TraesSTA1D03G00524550.1">
    <property type="protein sequence ID" value="TraesSTA1D03G00524550.1.CDS1"/>
    <property type="gene ID" value="TraesSTA1D03G00524550"/>
</dbReference>
<dbReference type="EnsemblPlants" id="TraesSTA3D03G01804980.1">
    <property type="protein sequence ID" value="TraesSTA3D03G01804980.1.CDS1"/>
    <property type="gene ID" value="TraesSTA3D03G01804980"/>
</dbReference>
<dbReference type="EnsemblPlants" id="TraesSYM1D03G00532440.1">
    <property type="protein sequence ID" value="TraesSYM1D03G00532440.1.CDS1"/>
    <property type="gene ID" value="TraesSYM1D03G00532440"/>
</dbReference>
<dbReference type="EnsemblPlants" id="TraesSYM2A03G00780500.1">
    <property type="protein sequence ID" value="TraesSYM2A03G00780500.1.CDS1"/>
    <property type="gene ID" value="TraesSYM2A03G00780500"/>
</dbReference>
<dbReference type="EnsemblPlants" id="TraesSYM2A03G00780530.1">
    <property type="protein sequence ID" value="TraesSYM2A03G00780530.1.CDS1"/>
    <property type="gene ID" value="TraesSYM2A03G00780530"/>
</dbReference>
<dbReference type="EnsemblPlants" id="TraesSYM3B03G01564050.1">
    <property type="protein sequence ID" value="TraesSYM3B03G01564050.1.CDS1"/>
    <property type="gene ID" value="TraesSYM3B03G01564050"/>
</dbReference>
<dbReference type="GeneID" id="803129"/>
<dbReference type="Gramene" id="TraesARI1D03G00531630.1">
    <property type="protein sequence ID" value="TraesARI1D03G00531630.1.CDS1"/>
    <property type="gene ID" value="TraesARI1D03G00531630"/>
</dbReference>
<dbReference type="Gramene" id="TraesARI2A03G00780810.1">
    <property type="protein sequence ID" value="TraesARI2A03G00780810.1.CDS1"/>
    <property type="gene ID" value="TraesARI2A03G00780810"/>
</dbReference>
<dbReference type="Gramene" id="TraesARI2A03G00780820.1">
    <property type="protein sequence ID" value="TraesARI2A03G00780820.1.CDS1"/>
    <property type="gene ID" value="TraesARI2A03G00780820"/>
</dbReference>
<dbReference type="Gramene" id="TraesARI2A03G00780840.1">
    <property type="protein sequence ID" value="TraesARI2A03G00780840.1.CDS1"/>
    <property type="gene ID" value="TraesARI2A03G00780840"/>
</dbReference>
<dbReference type="Gramene" id="TraesARI3A03G01541340.1">
    <property type="protein sequence ID" value="TraesARI3A03G01541340.1.CDS1"/>
    <property type="gene ID" value="TraesARI3A03G01541340"/>
</dbReference>
<dbReference type="Gramene" id="TraesARI3D03G01842130.1">
    <property type="protein sequence ID" value="TraesARI3D03G01842130.1.CDS1"/>
    <property type="gene ID" value="TraesARI3D03G01842130"/>
</dbReference>
<dbReference type="Gramene" id="TraesCS1D02G295600.1">
    <property type="protein sequence ID" value="TraesCS1D02G295600.1.cds1"/>
    <property type="gene ID" value="TraesCS1D02G295600"/>
</dbReference>
<dbReference type="Gramene" id="TraesCS1D03G0705500.1">
    <property type="protein sequence ID" value="TraesCS1D03G0705500.1.CDS1"/>
    <property type="gene ID" value="TraesCS1D03G0705500"/>
</dbReference>
<dbReference type="Gramene" id="TraesCS3D02G053000.1">
    <property type="protein sequence ID" value="TraesCS3D02G053000.1.cds1"/>
    <property type="gene ID" value="TraesCS3D02G053000"/>
</dbReference>
<dbReference type="Gramene" id="TraesCS3D03G0097900.1">
    <property type="protein sequence ID" value="TraesCS3D03G0097900.1.CDS1"/>
    <property type="gene ID" value="TraesCS3D03G0097900"/>
</dbReference>
<dbReference type="Gramene" id="TraesCSU02G268900.1">
    <property type="protein sequence ID" value="TraesCSU02G268900.1.cds1"/>
    <property type="gene ID" value="TraesCSU02G268900"/>
</dbReference>
<dbReference type="Gramene" id="TraesCSU03G0538000.1">
    <property type="protein sequence ID" value="TraesCSU03G0538000.1.CDS1"/>
    <property type="gene ID" value="TraesCSU03G0538000"/>
</dbReference>
<dbReference type="Gramene" id="TraesJAG1D03G00525330.1">
    <property type="protein sequence ID" value="TraesJAG1D03G00525330.1.CDS1"/>
    <property type="gene ID" value="TraesJAG1D03G00525330"/>
</dbReference>
<dbReference type="Gramene" id="TraesJAG3D03G01819610.1">
    <property type="protein sequence ID" value="TraesJAG3D03G01819610.1.CDS1"/>
    <property type="gene ID" value="TraesJAG3D03G01819610"/>
</dbReference>
<dbReference type="Gramene" id="TraesJUL1D03G00528630.1">
    <property type="protein sequence ID" value="TraesJUL1D03G00528630.1.CDS1"/>
    <property type="gene ID" value="TraesJUL1D03G00528630"/>
</dbReference>
<dbReference type="Gramene" id="TraesJUL3D03G01828580.1">
    <property type="protein sequence ID" value="TraesJUL3D03G01828580.1.CDS1"/>
    <property type="gene ID" value="TraesJUL3D03G01828580"/>
</dbReference>
<dbReference type="Gramene" id="TraesKAR1D01G0283970.1">
    <property type="protein sequence ID" value="cds.TraesKAR1D01G0283970.1"/>
    <property type="gene ID" value="TraesKAR1D01G0283970"/>
</dbReference>
<dbReference type="Gramene" id="TraesKAR2D01G0456630.1">
    <property type="protein sequence ID" value="cds.TraesKAR2D01G0456630.1"/>
    <property type="gene ID" value="TraesKAR2D01G0456630"/>
</dbReference>
<dbReference type="Gramene" id="TraesKAR3D01G0039630.1">
    <property type="protein sequence ID" value="cds.TraesKAR3D01G0039630.1"/>
    <property type="gene ID" value="TraesKAR3D01G0039630"/>
</dbReference>
<dbReference type="Gramene" id="TraesKAR6B01G0219430.1">
    <property type="protein sequence ID" value="cds.TraesKAR6B01G0219430.1"/>
    <property type="gene ID" value="TraesKAR6B01G0219430"/>
</dbReference>
<dbReference type="Gramene" id="TraesKAR6B01G0220180.1">
    <property type="protein sequence ID" value="cds.TraesKAR6B01G0220180.1"/>
    <property type="gene ID" value="TraesKAR6B01G0220180"/>
</dbReference>
<dbReference type="Gramene" id="TraesKARUn01G0033160.1">
    <property type="protein sequence ID" value="cds.TraesKARUn01G0033160.1"/>
    <property type="gene ID" value="TraesKARUn01G0033160"/>
</dbReference>
<dbReference type="Gramene" id="TraesKARUn01G0033190.1">
    <property type="protein sequence ID" value="cds.TraesKARUn01G0033190.1"/>
    <property type="gene ID" value="TraesKARUn01G0033190"/>
</dbReference>
<dbReference type="Gramene" id="TraesKARUn01G0033320.1">
    <property type="protein sequence ID" value="cds.TraesKARUn01G0033320.1"/>
    <property type="gene ID" value="TraesKARUn01G0033320"/>
</dbReference>
<dbReference type="Gramene" id="TraesKARUn01G0033630.1">
    <property type="protein sequence ID" value="cds.TraesKARUn01G0033630.1"/>
    <property type="gene ID" value="TraesKARUn01G0033630"/>
</dbReference>
<dbReference type="Gramene" id="TraesKARUn01G0033680.1">
    <property type="protein sequence ID" value="cds.TraesKARUn01G0033680.1"/>
    <property type="gene ID" value="TraesKARUn01G0033680"/>
</dbReference>
<dbReference type="Gramene" id="TraesKARUn01G0033730.1">
    <property type="protein sequence ID" value="cds.TraesKARUn01G0033730.1"/>
    <property type="gene ID" value="TraesKARUn01G0033730"/>
</dbReference>
<dbReference type="Gramene" id="TraesKARUn01G0075090.1">
    <property type="protein sequence ID" value="cds.TraesKARUn01G0075090.1"/>
    <property type="gene ID" value="TraesKARUn01G0075090"/>
</dbReference>
<dbReference type="Gramene" id="TraesKARUn01G0081430.1">
    <property type="protein sequence ID" value="cds.TraesKARUn01G0081430.1"/>
    <property type="gene ID" value="TraesKARUn01G0081430"/>
</dbReference>
<dbReference type="Gramene" id="TraesKARUn01G0082270.1">
    <property type="protein sequence ID" value="cds.TraesKARUn01G0082270.1"/>
    <property type="gene ID" value="TraesKARUn01G0082270"/>
</dbReference>
<dbReference type="Gramene" id="TraesKARUn01G0096130.1">
    <property type="protein sequence ID" value="cds.TraesKARUn01G0096130.1"/>
    <property type="gene ID" value="TraesKARUn01G0096130"/>
</dbReference>
<dbReference type="Gramene" id="TraesKARUn01G0100370.1">
    <property type="protein sequence ID" value="cds.TraesKARUn01G0100370.1"/>
    <property type="gene ID" value="TraesKARUn01G0100370"/>
</dbReference>
<dbReference type="Gramene" id="TraesKARUn01G0100600.1">
    <property type="protein sequence ID" value="cds.TraesKARUn01G0100600.1"/>
    <property type="gene ID" value="TraesKARUn01G0100600"/>
</dbReference>
<dbReference type="Gramene" id="TraesKARUn01G0100690.1">
    <property type="protein sequence ID" value="cds.TraesKARUn01G0100690.1"/>
    <property type="gene ID" value="TraesKARUn01G0100690"/>
</dbReference>
<dbReference type="Gramene" id="TraesKARUn01G0100880.1">
    <property type="protein sequence ID" value="cds.TraesKARUn01G0100880.1"/>
    <property type="gene ID" value="TraesKARUn01G0100880"/>
</dbReference>
<dbReference type="Gramene" id="TraesKARUn01G0118990.1">
    <property type="protein sequence ID" value="cds.TraesKARUn01G0118990.1"/>
    <property type="gene ID" value="TraesKARUn01G0118990"/>
</dbReference>
<dbReference type="Gramene" id="TraesKARUn01G0174180.1">
    <property type="protein sequence ID" value="cds.TraesKARUn01G0174180.1"/>
    <property type="gene ID" value="TraesKARUn01G0174180"/>
</dbReference>
<dbReference type="Gramene" id="TraesKARUn01G0175270.1">
    <property type="protein sequence ID" value="cds.TraesKARUn01G0175270.1"/>
    <property type="gene ID" value="TraesKARUn01G0175270"/>
</dbReference>
<dbReference type="Gramene" id="TraesKARUn01G0177160.1">
    <property type="protein sequence ID" value="cds.TraesKARUn01G0177160.1"/>
    <property type="gene ID" value="TraesKARUn01G0177160"/>
</dbReference>
<dbReference type="Gramene" id="TraesKARUn01G0184960.1">
    <property type="protein sequence ID" value="cds.TraesKARUn01G0184960.1"/>
    <property type="gene ID" value="TraesKARUn01G0184960"/>
</dbReference>
<dbReference type="Gramene" id="TraesLAC1D03G00529000.1">
    <property type="protein sequence ID" value="TraesLAC1D03G00529000.1.CDS1"/>
    <property type="gene ID" value="TraesLAC1D03G00529000"/>
</dbReference>
<dbReference type="Gramene" id="TraesLDM1D03G00486570.1">
    <property type="protein sequence ID" value="TraesLDM1D03G00486570.1.CDS1"/>
    <property type="gene ID" value="TraesLDM1D03G00486570"/>
</dbReference>
<dbReference type="Gramene" id="TraesLDM1D03G00528230.1">
    <property type="protein sequence ID" value="TraesLDM1D03G00528230.1.CDS1"/>
    <property type="gene ID" value="TraesLDM1D03G00528230"/>
</dbReference>
<dbReference type="Gramene" id="TraesLDM7B03G04275540.1">
    <property type="protein sequence ID" value="TraesLDM7B03G04275540.1.CDS1"/>
    <property type="gene ID" value="TraesLDM7B03G04275540"/>
</dbReference>
<dbReference type="Gramene" id="TraesMAC1D03G00525030.1">
    <property type="protein sequence ID" value="TraesMAC1D03G00525030.1.CDS1"/>
    <property type="gene ID" value="TraesMAC1D03G00525030"/>
</dbReference>
<dbReference type="Gramene" id="TraesMAC3D03G01808490.1">
    <property type="protein sequence ID" value="TraesMAC3D03G01808490.1.CDS1"/>
    <property type="gene ID" value="TraesMAC3D03G01808490"/>
</dbReference>
<dbReference type="Gramene" id="TraesNOR1D03G00533640.1">
    <property type="protein sequence ID" value="TraesNOR1D03G00533640.1.CDS1"/>
    <property type="gene ID" value="TraesNOR1D03G00533640"/>
</dbReference>
<dbReference type="Gramene" id="TraesNOR3D03G01837010.1">
    <property type="protein sequence ID" value="TraesNOR3D03G01837010.1.CDS1"/>
    <property type="gene ID" value="TraesNOR3D03G01837010"/>
</dbReference>
<dbReference type="Gramene" id="TraesNOR3D03G01837040.1">
    <property type="protein sequence ID" value="TraesNOR3D03G01837040.1.CDS1"/>
    <property type="gene ID" value="TraesNOR3D03G01837040"/>
</dbReference>
<dbReference type="Gramene" id="TraesPARA_EIv1.0_0296400.1">
    <property type="protein sequence ID" value="TraesPARA_EIv1.0_0296400.1.CDS1"/>
    <property type="gene ID" value="TraesPARA_EIv1.0_0296400"/>
</dbReference>
<dbReference type="Gramene" id="TraesPARA_EIv1.0_1061580.1">
    <property type="protein sequence ID" value="TraesPARA_EIv1.0_1061580.1.CDS1"/>
    <property type="gene ID" value="TraesPARA_EIv1.0_1061580"/>
</dbReference>
<dbReference type="Gramene" id="TraesPARA_EIv1.0_2055520.1">
    <property type="protein sequence ID" value="TraesPARA_EIv1.0_2055520.1.CDS1"/>
    <property type="gene ID" value="TraesPARA_EIv1.0_2055520"/>
</dbReference>
<dbReference type="Gramene" id="TraesPARA_EIv1.0_2645360.1">
    <property type="protein sequence ID" value="TraesPARA_EIv1.0_2645360.1.CDS1"/>
    <property type="gene ID" value="TraesPARA_EIv1.0_2645360"/>
</dbReference>
<dbReference type="Gramene" id="TraesPARA_EIv1.0_2682060.1">
    <property type="protein sequence ID" value="TraesPARA_EIv1.0_2682060.1.CDS1"/>
    <property type="gene ID" value="TraesPARA_EIv1.0_2682060"/>
</dbReference>
<dbReference type="Gramene" id="TraesRN1D0100749200.1">
    <property type="protein sequence ID" value="TraesRN1D0100749200.1"/>
    <property type="gene ID" value="TraesRN1D0100749200"/>
</dbReference>
<dbReference type="Gramene" id="TraesRN2D0100667000.1">
    <property type="protein sequence ID" value="TraesRN2D0100667000.1"/>
    <property type="gene ID" value="TraesRN2D0100667000"/>
</dbReference>
<dbReference type="Gramene" id="TraesRN3B0100437900.1">
    <property type="protein sequence ID" value="TraesRN3B0100437900.1"/>
    <property type="gene ID" value="TraesRN3B0100437900"/>
</dbReference>
<dbReference type="Gramene" id="TraesRN3D0100107600.1">
    <property type="protein sequence ID" value="TraesRN3D0100107600.1"/>
    <property type="gene ID" value="TraesRN3D0100107600"/>
</dbReference>
<dbReference type="Gramene" id="TraesRN5D0100018900.1">
    <property type="protein sequence ID" value="TraesRN5D0100018900.1"/>
    <property type="gene ID" value="TraesRN5D0100018900"/>
</dbReference>
<dbReference type="Gramene" id="TraesRN5D0100890400.1">
    <property type="protein sequence ID" value="TraesRN5D0100890400.1"/>
    <property type="gene ID" value="TraesRN5D0100890400"/>
</dbReference>
<dbReference type="Gramene" id="TraesSTA1D03G00524550.1">
    <property type="protein sequence ID" value="TraesSTA1D03G00524550.1.CDS1"/>
    <property type="gene ID" value="TraesSTA1D03G00524550"/>
</dbReference>
<dbReference type="Gramene" id="TraesSTA3D03G01804980.1">
    <property type="protein sequence ID" value="TraesSTA3D03G01804980.1.CDS1"/>
    <property type="gene ID" value="TraesSTA3D03G01804980"/>
</dbReference>
<dbReference type="Gramene" id="TraesSYM1D03G00532440.1">
    <property type="protein sequence ID" value="TraesSYM1D03G00532440.1.CDS1"/>
    <property type="gene ID" value="TraesSYM1D03G00532440"/>
</dbReference>
<dbReference type="Gramene" id="TraesSYM2A03G00780500.1">
    <property type="protein sequence ID" value="TraesSYM2A03G00780500.1.CDS1"/>
    <property type="gene ID" value="TraesSYM2A03G00780500"/>
</dbReference>
<dbReference type="Gramene" id="TraesSYM2A03G00780530.1">
    <property type="protein sequence ID" value="TraesSYM2A03G00780530.1.CDS1"/>
    <property type="gene ID" value="TraesSYM2A03G00780530"/>
</dbReference>
<dbReference type="Gramene" id="TraesSYM3B03G01564050.1">
    <property type="protein sequence ID" value="TraesSYM3B03G01564050.1.CDS1"/>
    <property type="gene ID" value="TraesSYM3B03G01564050"/>
</dbReference>
<dbReference type="KEGG" id="taes:803129"/>
<dbReference type="eggNOG" id="ENOG502S7HT">
    <property type="taxonomic scope" value="Eukaryota"/>
</dbReference>
<dbReference type="HOGENOM" id="CLU_190949_3_0_1"/>
<dbReference type="OrthoDB" id="724366at2759"/>
<dbReference type="Proteomes" id="UP000019116">
    <property type="component" value="Chloroplast"/>
</dbReference>
<dbReference type="GO" id="GO:0009507">
    <property type="term" value="C:chloroplast"/>
    <property type="evidence" value="ECO:0007669"/>
    <property type="project" value="UniProtKB-SubCell"/>
</dbReference>
<dbReference type="GO" id="GO:1990904">
    <property type="term" value="C:ribonucleoprotein complex"/>
    <property type="evidence" value="ECO:0007669"/>
    <property type="project" value="UniProtKB-KW"/>
</dbReference>
<dbReference type="GO" id="GO:0005840">
    <property type="term" value="C:ribosome"/>
    <property type="evidence" value="ECO:0007669"/>
    <property type="project" value="UniProtKB-KW"/>
</dbReference>
<dbReference type="GO" id="GO:0003735">
    <property type="term" value="F:structural constituent of ribosome"/>
    <property type="evidence" value="ECO:0007669"/>
    <property type="project" value="InterPro"/>
</dbReference>
<dbReference type="GO" id="GO:0006412">
    <property type="term" value="P:translation"/>
    <property type="evidence" value="ECO:0007669"/>
    <property type="project" value="UniProtKB-UniRule"/>
</dbReference>
<dbReference type="Gene3D" id="2.20.28.120">
    <property type="entry name" value="Ribosomal protein L33"/>
    <property type="match status" value="1"/>
</dbReference>
<dbReference type="HAMAP" id="MF_00294">
    <property type="entry name" value="Ribosomal_bL33"/>
    <property type="match status" value="1"/>
</dbReference>
<dbReference type="InterPro" id="IPR001705">
    <property type="entry name" value="Ribosomal_bL33"/>
</dbReference>
<dbReference type="InterPro" id="IPR018264">
    <property type="entry name" value="Ribosomal_bL33_CS"/>
</dbReference>
<dbReference type="InterPro" id="IPR038584">
    <property type="entry name" value="Ribosomal_bL33_sf"/>
</dbReference>
<dbReference type="InterPro" id="IPR011332">
    <property type="entry name" value="Ribosomal_zn-bd"/>
</dbReference>
<dbReference type="NCBIfam" id="NF001764">
    <property type="entry name" value="PRK00504.1"/>
    <property type="match status" value="1"/>
</dbReference>
<dbReference type="NCBIfam" id="NF001860">
    <property type="entry name" value="PRK00595.1"/>
    <property type="match status" value="1"/>
</dbReference>
<dbReference type="NCBIfam" id="TIGR01023">
    <property type="entry name" value="rpmG_bact"/>
    <property type="match status" value="1"/>
</dbReference>
<dbReference type="PANTHER" id="PTHR43168">
    <property type="entry name" value="50S RIBOSOMAL PROTEIN L33, CHLOROPLASTIC"/>
    <property type="match status" value="1"/>
</dbReference>
<dbReference type="PANTHER" id="PTHR43168:SF2">
    <property type="entry name" value="LARGE RIBOSOMAL SUBUNIT PROTEIN BL33C"/>
    <property type="match status" value="1"/>
</dbReference>
<dbReference type="Pfam" id="PF00471">
    <property type="entry name" value="Ribosomal_L33"/>
    <property type="match status" value="1"/>
</dbReference>
<dbReference type="SUPFAM" id="SSF57829">
    <property type="entry name" value="Zn-binding ribosomal proteins"/>
    <property type="match status" value="1"/>
</dbReference>
<dbReference type="PROSITE" id="PS00582">
    <property type="entry name" value="RIBOSOMAL_L33"/>
    <property type="match status" value="1"/>
</dbReference>
<comment type="subcellular location">
    <subcellularLocation>
        <location>Plastid</location>
        <location>Chloroplast</location>
    </subcellularLocation>
</comment>
<comment type="similarity">
    <text evidence="1">Belongs to the bacterial ribosomal protein bL33 family.</text>
</comment>
<accession>Q95H56</accession>
<sequence length="66" mass="7748">MAKGKDVRIRVILECISCVRKGANEESTGISRYSTQKNRHNTPGQLEFKKFCRYCRKHTTHHEIKK</sequence>
<name>RK33_WHEAT</name>
<organism>
    <name type="scientific">Triticum aestivum</name>
    <name type="common">Wheat</name>
    <dbReference type="NCBI Taxonomy" id="4565"/>
    <lineage>
        <taxon>Eukaryota</taxon>
        <taxon>Viridiplantae</taxon>
        <taxon>Streptophyta</taxon>
        <taxon>Embryophyta</taxon>
        <taxon>Tracheophyta</taxon>
        <taxon>Spermatophyta</taxon>
        <taxon>Magnoliopsida</taxon>
        <taxon>Liliopsida</taxon>
        <taxon>Poales</taxon>
        <taxon>Poaceae</taxon>
        <taxon>BOP clade</taxon>
        <taxon>Pooideae</taxon>
        <taxon>Triticodae</taxon>
        <taxon>Triticeae</taxon>
        <taxon>Triticinae</taxon>
        <taxon>Triticum</taxon>
    </lineage>
</organism>
<geneLocation type="chloroplast"/>
<proteinExistence type="inferred from homology"/>
<protein>
    <recommendedName>
        <fullName evidence="1">Large ribosomal subunit protein bL33c</fullName>
    </recommendedName>
    <alternativeName>
        <fullName evidence="2">50S ribosomal protein L33, chloroplastic</fullName>
    </alternativeName>
</protein>
<evidence type="ECO:0000255" key="1">
    <source>
        <dbReference type="HAMAP-Rule" id="MF_00294"/>
    </source>
</evidence>
<evidence type="ECO:0000305" key="2"/>
<keyword id="KW-0150">Chloroplast</keyword>
<keyword id="KW-0934">Plastid</keyword>
<keyword id="KW-1185">Reference proteome</keyword>
<keyword id="KW-0687">Ribonucleoprotein</keyword>
<keyword id="KW-0689">Ribosomal protein</keyword>
<reference key="1">
    <citation type="journal article" date="2000" name="Plant Mol. Biol. Rep.">
        <title>Chinese spring wheat (Triticum aestivum L.) chloroplast genome: complete sequence and contig clones.</title>
        <authorList>
            <person name="Ogihara Y."/>
            <person name="Isono K."/>
            <person name="Kojima T."/>
            <person name="Endo A."/>
            <person name="Hanaoka M."/>
            <person name="Shiina T."/>
            <person name="Terachi T."/>
            <person name="Utsugi S."/>
            <person name="Murata M."/>
            <person name="Mori N."/>
            <person name="Takumi S."/>
            <person name="Ikeo K."/>
            <person name="Gojobori T."/>
            <person name="Murai R."/>
            <person name="Murai K."/>
            <person name="Matsuoka Y."/>
            <person name="Ohnishi Y."/>
            <person name="Tajiri H."/>
            <person name="Tsunewaki K."/>
        </authorList>
    </citation>
    <scope>NUCLEOTIDE SEQUENCE [LARGE SCALE GENOMIC DNA]</scope>
    <source>
        <strain>cv. Chinese Spring</strain>
    </source>
</reference>
<feature type="chain" id="PRO_0000170305" description="Large ribosomal subunit protein bL33c">
    <location>
        <begin position="1"/>
        <end position="66"/>
    </location>
</feature>